<comment type="subcellular location">
    <subcellularLocation>
        <location evidence="1">Secreted</location>
    </subcellularLocation>
</comment>
<comment type="tissue specificity">
    <text evidence="7">Expressed in testis and ovary. Low level in spleen, epididymis, kidney, and uterus. Expressed in primary cultures of Sertoli cells.</text>
</comment>
<comment type="similarity">
    <text evidence="5 6">Belongs to the peptidase C1 family.</text>
</comment>
<comment type="caution">
    <text evidence="8">This protein is distinct from Tes/Testin which is a LIM domain protein.</text>
</comment>
<sequence length="333" mass="38090">MIAVLFLAILCLEIDSTAPTLDPSLDVQWNEWRTKHGKAYNVNEERLRRAVWEKNFKMIELHNWEYLEGKHDFTMTMNAFGDLTNTEFVKMMTGFRRQKIKRMHVFQDHQFLYVPKYVDWRMLGYVTPVKNQGYCASSWAFSATGSLEGQMFKKTGRLVPLSEQNLLDCMGSNVTHDCSGGFMQNAFQYVKDNGGLATEESYPYIGPGRKCRYHAENSAANVRDFVQIPGREEALMKAVAKVGPISVAVDASHDSFQFYDSGIYYEPQCKRVHLNHAVLVVGYGFEGEESDGNSYWLVKNSWGEEWGMKGYIKIAKDWNNHCGIATLATYPIV</sequence>
<proteinExistence type="evidence at transcript level"/>
<name>TEST2_MOUSE</name>
<accession>Q80UB0</accession>
<accession>Q3UKN7</accession>
<reference evidence="8 10" key="1">
    <citation type="journal article" date="2003" name="Biol. Reprod.">
        <title>Mouse testin: complementary DNA cloning, genomic organization, and characterization of its proximal promoter region.</title>
        <authorList>
            <person name="Cheng C.K."/>
            <person name="Cheung C.H."/>
            <person name="Lee W.M."/>
        </authorList>
    </citation>
    <scope>NUCLEOTIDE SEQUENCE [MRNA]</scope>
    <scope>TISSUE SPECIFICITY</scope>
    <source>
        <strain evidence="10">BALB/cJ</strain>
        <tissue evidence="7">Testis</tissue>
    </source>
</reference>
<reference evidence="11" key="2">
    <citation type="journal article" date="2005" name="Science">
        <title>The transcriptional landscape of the mammalian genome.</title>
        <authorList>
            <person name="Carninci P."/>
            <person name="Kasukawa T."/>
            <person name="Katayama S."/>
            <person name="Gough J."/>
            <person name="Frith M.C."/>
            <person name="Maeda N."/>
            <person name="Oyama R."/>
            <person name="Ravasi T."/>
            <person name="Lenhard B."/>
            <person name="Wells C."/>
            <person name="Kodzius R."/>
            <person name="Shimokawa K."/>
            <person name="Bajic V.B."/>
            <person name="Brenner S.E."/>
            <person name="Batalov S."/>
            <person name="Forrest A.R."/>
            <person name="Zavolan M."/>
            <person name="Davis M.J."/>
            <person name="Wilming L.G."/>
            <person name="Aidinis V."/>
            <person name="Allen J.E."/>
            <person name="Ambesi-Impiombato A."/>
            <person name="Apweiler R."/>
            <person name="Aturaliya R.N."/>
            <person name="Bailey T.L."/>
            <person name="Bansal M."/>
            <person name="Baxter L."/>
            <person name="Beisel K.W."/>
            <person name="Bersano T."/>
            <person name="Bono H."/>
            <person name="Chalk A.M."/>
            <person name="Chiu K.P."/>
            <person name="Choudhary V."/>
            <person name="Christoffels A."/>
            <person name="Clutterbuck D.R."/>
            <person name="Crowe M.L."/>
            <person name="Dalla E."/>
            <person name="Dalrymple B.P."/>
            <person name="de Bono B."/>
            <person name="Della Gatta G."/>
            <person name="di Bernardo D."/>
            <person name="Down T."/>
            <person name="Engstrom P."/>
            <person name="Fagiolini M."/>
            <person name="Faulkner G."/>
            <person name="Fletcher C.F."/>
            <person name="Fukushima T."/>
            <person name="Furuno M."/>
            <person name="Futaki S."/>
            <person name="Gariboldi M."/>
            <person name="Georgii-Hemming P."/>
            <person name="Gingeras T.R."/>
            <person name="Gojobori T."/>
            <person name="Green R.E."/>
            <person name="Gustincich S."/>
            <person name="Harbers M."/>
            <person name="Hayashi Y."/>
            <person name="Hensch T.K."/>
            <person name="Hirokawa N."/>
            <person name="Hill D."/>
            <person name="Huminiecki L."/>
            <person name="Iacono M."/>
            <person name="Ikeo K."/>
            <person name="Iwama A."/>
            <person name="Ishikawa T."/>
            <person name="Jakt M."/>
            <person name="Kanapin A."/>
            <person name="Katoh M."/>
            <person name="Kawasawa Y."/>
            <person name="Kelso J."/>
            <person name="Kitamura H."/>
            <person name="Kitano H."/>
            <person name="Kollias G."/>
            <person name="Krishnan S.P."/>
            <person name="Kruger A."/>
            <person name="Kummerfeld S.K."/>
            <person name="Kurochkin I.V."/>
            <person name="Lareau L.F."/>
            <person name="Lazarevic D."/>
            <person name="Lipovich L."/>
            <person name="Liu J."/>
            <person name="Liuni S."/>
            <person name="McWilliam S."/>
            <person name="Madan Babu M."/>
            <person name="Madera M."/>
            <person name="Marchionni L."/>
            <person name="Matsuda H."/>
            <person name="Matsuzawa S."/>
            <person name="Miki H."/>
            <person name="Mignone F."/>
            <person name="Miyake S."/>
            <person name="Morris K."/>
            <person name="Mottagui-Tabar S."/>
            <person name="Mulder N."/>
            <person name="Nakano N."/>
            <person name="Nakauchi H."/>
            <person name="Ng P."/>
            <person name="Nilsson R."/>
            <person name="Nishiguchi S."/>
            <person name="Nishikawa S."/>
            <person name="Nori F."/>
            <person name="Ohara O."/>
            <person name="Okazaki Y."/>
            <person name="Orlando V."/>
            <person name="Pang K.C."/>
            <person name="Pavan W.J."/>
            <person name="Pavesi G."/>
            <person name="Pesole G."/>
            <person name="Petrovsky N."/>
            <person name="Piazza S."/>
            <person name="Reed J."/>
            <person name="Reid J.F."/>
            <person name="Ring B.Z."/>
            <person name="Ringwald M."/>
            <person name="Rost B."/>
            <person name="Ruan Y."/>
            <person name="Salzberg S.L."/>
            <person name="Sandelin A."/>
            <person name="Schneider C."/>
            <person name="Schoenbach C."/>
            <person name="Sekiguchi K."/>
            <person name="Semple C.A."/>
            <person name="Seno S."/>
            <person name="Sessa L."/>
            <person name="Sheng Y."/>
            <person name="Shibata Y."/>
            <person name="Shimada H."/>
            <person name="Shimada K."/>
            <person name="Silva D."/>
            <person name="Sinclair B."/>
            <person name="Sperling S."/>
            <person name="Stupka E."/>
            <person name="Sugiura K."/>
            <person name="Sultana R."/>
            <person name="Takenaka Y."/>
            <person name="Taki K."/>
            <person name="Tammoja K."/>
            <person name="Tan S.L."/>
            <person name="Tang S."/>
            <person name="Taylor M.S."/>
            <person name="Tegner J."/>
            <person name="Teichmann S.A."/>
            <person name="Ueda H.R."/>
            <person name="van Nimwegen E."/>
            <person name="Verardo R."/>
            <person name="Wei C.L."/>
            <person name="Yagi K."/>
            <person name="Yamanishi H."/>
            <person name="Zabarovsky E."/>
            <person name="Zhu S."/>
            <person name="Zimmer A."/>
            <person name="Hide W."/>
            <person name="Bult C."/>
            <person name="Grimmond S.M."/>
            <person name="Teasdale R.D."/>
            <person name="Liu E.T."/>
            <person name="Brusic V."/>
            <person name="Quackenbush J."/>
            <person name="Wahlestedt C."/>
            <person name="Mattick J.S."/>
            <person name="Hume D.A."/>
            <person name="Kai C."/>
            <person name="Sasaki D."/>
            <person name="Tomaru Y."/>
            <person name="Fukuda S."/>
            <person name="Kanamori-Katayama M."/>
            <person name="Suzuki M."/>
            <person name="Aoki J."/>
            <person name="Arakawa T."/>
            <person name="Iida J."/>
            <person name="Imamura K."/>
            <person name="Itoh M."/>
            <person name="Kato T."/>
            <person name="Kawaji H."/>
            <person name="Kawagashira N."/>
            <person name="Kawashima T."/>
            <person name="Kojima M."/>
            <person name="Kondo S."/>
            <person name="Konno H."/>
            <person name="Nakano K."/>
            <person name="Ninomiya N."/>
            <person name="Nishio T."/>
            <person name="Okada M."/>
            <person name="Plessy C."/>
            <person name="Shibata K."/>
            <person name="Shiraki T."/>
            <person name="Suzuki S."/>
            <person name="Tagami M."/>
            <person name="Waki K."/>
            <person name="Watahiki A."/>
            <person name="Okamura-Oho Y."/>
            <person name="Suzuki H."/>
            <person name="Kawai J."/>
            <person name="Hayashizaki Y."/>
        </authorList>
    </citation>
    <scope>NUCLEOTIDE SEQUENCE [LARGE SCALE MRNA]</scope>
    <source>
        <strain evidence="11">C57BL/6J</strain>
        <tissue evidence="11">Placenta</tissue>
    </source>
</reference>
<reference evidence="9" key="3">
    <citation type="journal article" date="2004" name="Genome Res.">
        <title>The status, quality, and expansion of the NIH full-length cDNA project: the Mammalian Gene Collection (MGC).</title>
        <authorList>
            <consortium name="The MGC Project Team"/>
        </authorList>
    </citation>
    <scope>NUCLEOTIDE SEQUENCE [LARGE SCALE MRNA]</scope>
    <source>
        <strain>CD-1</strain>
        <tissue>Sertoli cell</tissue>
    </source>
</reference>
<dbReference type="EMBL" id="AY146988">
    <property type="protein sequence ID" value="AAN63093.1"/>
    <property type="molecule type" value="mRNA"/>
</dbReference>
<dbReference type="EMBL" id="AK145933">
    <property type="protein sequence ID" value="BAE26764.1"/>
    <property type="molecule type" value="mRNA"/>
</dbReference>
<dbReference type="EMBL" id="BC061218">
    <property type="protein sequence ID" value="AAH61218.1"/>
    <property type="molecule type" value="mRNA"/>
</dbReference>
<dbReference type="CCDS" id="CCDS26583.1"/>
<dbReference type="RefSeq" id="NP_835199.1">
    <property type="nucleotide sequence ID" value="NM_178098.2"/>
</dbReference>
<dbReference type="SMR" id="Q80UB0"/>
<dbReference type="BioGRID" id="229551">
    <property type="interactions" value="1"/>
</dbReference>
<dbReference type="FunCoup" id="Q80UB0">
    <property type="interactions" value="64"/>
</dbReference>
<dbReference type="STRING" id="10090.ENSMUSP00000089157"/>
<dbReference type="GlyGen" id="Q80UB0">
    <property type="glycosylation" value="1 site"/>
</dbReference>
<dbReference type="PaxDb" id="10090-ENSMUSP00000089157"/>
<dbReference type="DNASU" id="214639"/>
<dbReference type="Ensembl" id="ENSMUST00000091569.7">
    <property type="protein sequence ID" value="ENSMUSP00000089157.6"/>
    <property type="gene ID" value="ENSMUSG00000050345.10"/>
</dbReference>
<dbReference type="GeneID" id="214639"/>
<dbReference type="KEGG" id="mmu:214639"/>
<dbReference type="UCSC" id="uc007qvs.1">
    <property type="organism name" value="mouse"/>
</dbReference>
<dbReference type="AGR" id="MGI:1922258"/>
<dbReference type="MGI" id="MGI:1922258">
    <property type="gene designation" value="4930486L24Rik"/>
</dbReference>
<dbReference type="VEuPathDB" id="HostDB:ENSMUSG00000050345"/>
<dbReference type="eggNOG" id="KOG1543">
    <property type="taxonomic scope" value="Eukaryota"/>
</dbReference>
<dbReference type="GeneTree" id="ENSGT00940000153321"/>
<dbReference type="HOGENOM" id="CLU_012184_1_2_1"/>
<dbReference type="InParanoid" id="Q80UB0"/>
<dbReference type="OMA" id="LHNWEYL"/>
<dbReference type="OrthoDB" id="9544747at2759"/>
<dbReference type="PhylomeDB" id="Q80UB0"/>
<dbReference type="TreeFam" id="TF313739"/>
<dbReference type="BioGRID-ORCS" id="214639">
    <property type="hits" value="6 hits in 77 CRISPR screens"/>
</dbReference>
<dbReference type="PRO" id="PR:Q80UB0"/>
<dbReference type="Proteomes" id="UP000000589">
    <property type="component" value="Chromosome 13"/>
</dbReference>
<dbReference type="RNAct" id="Q80UB0">
    <property type="molecule type" value="protein"/>
</dbReference>
<dbReference type="Bgee" id="ENSMUSG00000050345">
    <property type="expression patterns" value="Expressed in ectoplacental cone and 23 other cell types or tissues"/>
</dbReference>
<dbReference type="GO" id="GO:0030054">
    <property type="term" value="C:cell junction"/>
    <property type="evidence" value="ECO:0007669"/>
    <property type="project" value="Ensembl"/>
</dbReference>
<dbReference type="GO" id="GO:0005576">
    <property type="term" value="C:extracellular region"/>
    <property type="evidence" value="ECO:0007669"/>
    <property type="project" value="UniProtKB-SubCell"/>
</dbReference>
<dbReference type="GO" id="GO:0008234">
    <property type="term" value="F:cysteine-type peptidase activity"/>
    <property type="evidence" value="ECO:0007669"/>
    <property type="project" value="InterPro"/>
</dbReference>
<dbReference type="GO" id="GO:0006508">
    <property type="term" value="P:proteolysis"/>
    <property type="evidence" value="ECO:0007669"/>
    <property type="project" value="InterPro"/>
</dbReference>
<dbReference type="CDD" id="cd02248">
    <property type="entry name" value="Peptidase_C1A"/>
    <property type="match status" value="1"/>
</dbReference>
<dbReference type="FunFam" id="3.90.70.10:FF:000332">
    <property type="entry name" value="Cathepsin L1"/>
    <property type="match status" value="1"/>
</dbReference>
<dbReference type="Gene3D" id="3.90.70.10">
    <property type="entry name" value="Cysteine proteinases"/>
    <property type="match status" value="1"/>
</dbReference>
<dbReference type="InterPro" id="IPR038765">
    <property type="entry name" value="Papain-like_cys_pep_sf"/>
</dbReference>
<dbReference type="InterPro" id="IPR025661">
    <property type="entry name" value="Pept_asp_AS"/>
</dbReference>
<dbReference type="InterPro" id="IPR025660">
    <property type="entry name" value="Pept_his_AS"/>
</dbReference>
<dbReference type="InterPro" id="IPR013128">
    <property type="entry name" value="Peptidase_C1A"/>
</dbReference>
<dbReference type="InterPro" id="IPR000668">
    <property type="entry name" value="Peptidase_C1A_C"/>
</dbReference>
<dbReference type="InterPro" id="IPR039417">
    <property type="entry name" value="Peptidase_C1A_papain-like"/>
</dbReference>
<dbReference type="InterPro" id="IPR013201">
    <property type="entry name" value="Prot_inhib_I29"/>
</dbReference>
<dbReference type="PANTHER" id="PTHR12411">
    <property type="entry name" value="CYSTEINE PROTEASE FAMILY C1-RELATED"/>
    <property type="match status" value="1"/>
</dbReference>
<dbReference type="Pfam" id="PF08246">
    <property type="entry name" value="Inhibitor_I29"/>
    <property type="match status" value="1"/>
</dbReference>
<dbReference type="Pfam" id="PF00112">
    <property type="entry name" value="Peptidase_C1"/>
    <property type="match status" value="1"/>
</dbReference>
<dbReference type="PRINTS" id="PR00705">
    <property type="entry name" value="PAPAIN"/>
</dbReference>
<dbReference type="SMART" id="SM00848">
    <property type="entry name" value="Inhibitor_I29"/>
    <property type="match status" value="1"/>
</dbReference>
<dbReference type="SMART" id="SM00645">
    <property type="entry name" value="Pept_C1"/>
    <property type="match status" value="1"/>
</dbReference>
<dbReference type="SUPFAM" id="SSF54001">
    <property type="entry name" value="Cysteine proteinases"/>
    <property type="match status" value="1"/>
</dbReference>
<dbReference type="PROSITE" id="PS00640">
    <property type="entry name" value="THIOL_PROTEASE_ASN"/>
    <property type="match status" value="1"/>
</dbReference>
<dbReference type="PROSITE" id="PS00639">
    <property type="entry name" value="THIOL_PROTEASE_HIS"/>
    <property type="match status" value="1"/>
</dbReference>
<evidence type="ECO:0000250" key="1"/>
<evidence type="ECO:0000250" key="2">
    <source>
        <dbReference type="UniProtKB" id="P07711"/>
    </source>
</evidence>
<evidence type="ECO:0000250" key="3">
    <source>
        <dbReference type="UniProtKB" id="P15242"/>
    </source>
</evidence>
<evidence type="ECO:0000255" key="4"/>
<evidence type="ECO:0000255" key="5">
    <source>
        <dbReference type="PROSITE-ProRule" id="PRU10089"/>
    </source>
</evidence>
<evidence type="ECO:0000255" key="6">
    <source>
        <dbReference type="PROSITE-ProRule" id="PRU10090"/>
    </source>
</evidence>
<evidence type="ECO:0000269" key="7">
    <source>
    </source>
</evidence>
<evidence type="ECO:0000305" key="8"/>
<evidence type="ECO:0000312" key="9">
    <source>
        <dbReference type="EMBL" id="AAH61218.1"/>
    </source>
</evidence>
<evidence type="ECO:0000312" key="10">
    <source>
        <dbReference type="EMBL" id="AAN63093.1"/>
    </source>
</evidence>
<evidence type="ECO:0000312" key="11">
    <source>
        <dbReference type="EMBL" id="BAE26764.1"/>
    </source>
</evidence>
<keyword id="KW-1015">Disulfide bond</keyword>
<keyword id="KW-0325">Glycoprotein</keyword>
<keyword id="KW-1185">Reference proteome</keyword>
<keyword id="KW-0964">Secreted</keyword>
<keyword id="KW-0732">Signal</keyword>
<protein>
    <recommendedName>
        <fullName>Testin-2</fullName>
    </recommendedName>
    <component>
        <recommendedName>
            <fullName>Testin-1</fullName>
        </recommendedName>
    </component>
</protein>
<feature type="signal peptide" evidence="3">
    <location>
        <begin position="1"/>
        <end position="17"/>
    </location>
</feature>
<feature type="chain" id="PRO_0000284681" description="Testin-2">
    <location>
        <begin position="18"/>
        <end position="333"/>
    </location>
</feature>
<feature type="chain" id="PRO_0000284682" description="Testin-1">
    <location>
        <begin position="20"/>
        <end position="333"/>
    </location>
</feature>
<feature type="active site" evidence="2">
    <location>
        <position position="276"/>
    </location>
</feature>
<feature type="active site" evidence="2">
    <location>
        <position position="300"/>
    </location>
</feature>
<feature type="site" description="Ancestral active site">
    <location>
        <position position="138"/>
    </location>
</feature>
<feature type="glycosylation site" description="N-linked (GlcNAc...) asparagine" evidence="4">
    <location>
        <position position="173"/>
    </location>
</feature>
<feature type="disulfide bond" evidence="2">
    <location>
        <begin position="135"/>
        <end position="178"/>
    </location>
</feature>
<feature type="disulfide bond" evidence="2">
    <location>
        <begin position="169"/>
        <end position="211"/>
    </location>
</feature>
<feature type="disulfide bond" evidence="2">
    <location>
        <begin position="269"/>
        <end position="322"/>
    </location>
</feature>
<feature type="sequence conflict" description="In Ref. 2; BAE26764." evidence="8" ref="2">
    <original>G</original>
    <variation>D</variation>
    <location>
        <position position="208"/>
    </location>
</feature>
<organism>
    <name type="scientific">Mus musculus</name>
    <name type="common">Mouse</name>
    <dbReference type="NCBI Taxonomy" id="10090"/>
    <lineage>
        <taxon>Eukaryota</taxon>
        <taxon>Metazoa</taxon>
        <taxon>Chordata</taxon>
        <taxon>Craniata</taxon>
        <taxon>Vertebrata</taxon>
        <taxon>Euteleostomi</taxon>
        <taxon>Mammalia</taxon>
        <taxon>Eutheria</taxon>
        <taxon>Euarchontoglires</taxon>
        <taxon>Glires</taxon>
        <taxon>Rodentia</taxon>
        <taxon>Myomorpha</taxon>
        <taxon>Muroidea</taxon>
        <taxon>Muridae</taxon>
        <taxon>Murinae</taxon>
        <taxon>Mus</taxon>
        <taxon>Mus</taxon>
    </lineage>
</organism>